<accession>Q3MHJ5</accession>
<reference key="1">
    <citation type="submission" date="2005-09" db="EMBL/GenBank/DDBJ databases">
        <authorList>
            <consortium name="NIH - Mammalian Gene Collection (MGC) project"/>
        </authorList>
    </citation>
    <scope>NUCLEOTIDE SEQUENCE [LARGE SCALE MRNA]</scope>
    <source>
        <strain>Hereford</strain>
        <tissue>Heart ventricle</tissue>
    </source>
</reference>
<reference key="2">
    <citation type="journal article" date="2001" name="J. Biol. Chem.">
        <title>The large subunit of the mammalian mitochondrial ribosome. Analysis of the complement of ribosomal proteins present.</title>
        <authorList>
            <person name="Koc E.C."/>
            <person name="Burkhart W."/>
            <person name="Blackburn K."/>
            <person name="Moyer M.B."/>
            <person name="Schlatzer D.M."/>
            <person name="Moseley A."/>
            <person name="Spremulli L.L."/>
        </authorList>
    </citation>
    <scope>IDENTIFICATION BY MASS SPECTROMETRY</scope>
    <scope>IDENTIFICATION IN THE 39S MITOCHONDRIAL RIBOSOME</scope>
    <scope>SUBCELLULAR LOCATION</scope>
</reference>
<name>RM54_BOVIN</name>
<organism>
    <name type="scientific">Bos taurus</name>
    <name type="common">Bovine</name>
    <dbReference type="NCBI Taxonomy" id="9913"/>
    <lineage>
        <taxon>Eukaryota</taxon>
        <taxon>Metazoa</taxon>
        <taxon>Chordata</taxon>
        <taxon>Craniata</taxon>
        <taxon>Vertebrata</taxon>
        <taxon>Euteleostomi</taxon>
        <taxon>Mammalia</taxon>
        <taxon>Eutheria</taxon>
        <taxon>Laurasiatheria</taxon>
        <taxon>Artiodactyla</taxon>
        <taxon>Ruminantia</taxon>
        <taxon>Pecora</taxon>
        <taxon>Bovidae</taxon>
        <taxon>Bovinae</taxon>
        <taxon>Bos</taxon>
    </lineage>
</organism>
<dbReference type="EMBL" id="BC105215">
    <property type="protein sequence ID" value="AAI05216.1"/>
    <property type="molecule type" value="mRNA"/>
</dbReference>
<dbReference type="RefSeq" id="NP_001030277.1">
    <property type="nucleotide sequence ID" value="NM_001035105.2"/>
</dbReference>
<dbReference type="SMR" id="Q3MHJ5"/>
<dbReference type="FunCoup" id="Q3MHJ5">
    <property type="interactions" value="1026"/>
</dbReference>
<dbReference type="STRING" id="9913.ENSBTAP00000011049"/>
<dbReference type="PaxDb" id="9913-ENSBTAP00000011049"/>
<dbReference type="GeneID" id="511926"/>
<dbReference type="KEGG" id="bta:511926"/>
<dbReference type="CTD" id="116541"/>
<dbReference type="eggNOG" id="KOG3435">
    <property type="taxonomic scope" value="Eukaryota"/>
</dbReference>
<dbReference type="InParanoid" id="Q3MHJ5"/>
<dbReference type="OrthoDB" id="10252718at2759"/>
<dbReference type="Proteomes" id="UP000009136">
    <property type="component" value="Unplaced"/>
</dbReference>
<dbReference type="GO" id="GO:0005743">
    <property type="term" value="C:mitochondrial inner membrane"/>
    <property type="evidence" value="ECO:0000304"/>
    <property type="project" value="Reactome"/>
</dbReference>
<dbReference type="GO" id="GO:0005762">
    <property type="term" value="C:mitochondrial large ribosomal subunit"/>
    <property type="evidence" value="ECO:0000250"/>
    <property type="project" value="UniProtKB"/>
</dbReference>
<dbReference type="GO" id="GO:0003735">
    <property type="term" value="F:structural constituent of ribosome"/>
    <property type="evidence" value="ECO:0000318"/>
    <property type="project" value="GO_Central"/>
</dbReference>
<dbReference type="InterPro" id="IPR013870">
    <property type="entry name" value="Ribosomal_mL54"/>
</dbReference>
<dbReference type="PANTHER" id="PTHR28595">
    <property type="entry name" value="39S RIBOSOMAL PROTEIN L54, MITOCHONDRIAL"/>
    <property type="match status" value="1"/>
</dbReference>
<dbReference type="PANTHER" id="PTHR28595:SF1">
    <property type="entry name" value="LARGE RIBOSOMAL SUBUNIT PROTEIN ML54"/>
    <property type="match status" value="1"/>
</dbReference>
<dbReference type="Pfam" id="PF08561">
    <property type="entry name" value="Ribosomal_L37"/>
    <property type="match status" value="1"/>
</dbReference>
<keyword id="KW-0496">Mitochondrion</keyword>
<keyword id="KW-1185">Reference proteome</keyword>
<keyword id="KW-0687">Ribonucleoprotein</keyword>
<keyword id="KW-0689">Ribosomal protein</keyword>
<keyword id="KW-0809">Transit peptide</keyword>
<proteinExistence type="evidence at protein level"/>
<sequence>MAARRLFGATGSWARWRAWELPDPAGSVRLHVRDYAKRPVFKGGKGAKGAAVGETLKDPEVCTDPVQLTTHPMGVNIYKEGQDVVLKPDSEYPEWLFQMNVGPPKKLEELDPETREYWRLLRKHNIWRHNRLSKNQKF</sequence>
<comment type="subunit">
    <text evidence="2">Component of the mitochondrial ribosome large subunit (39S) which comprises a 16S rRNA and about 50 distinct proteins.</text>
</comment>
<comment type="subcellular location">
    <subcellularLocation>
        <location evidence="2">Mitochondrion</location>
    </subcellularLocation>
</comment>
<comment type="similarity">
    <text evidence="3">Belongs to the mitochondrion-specific ribosomal protein mL54 family.</text>
</comment>
<protein>
    <recommendedName>
        <fullName evidence="3">Large ribosomal subunit protein mL54</fullName>
    </recommendedName>
    <alternativeName>
        <fullName>39S ribosomal protein L54, mitochondrial</fullName>
        <shortName>L54mt</shortName>
        <shortName>MRP-L54</shortName>
    </alternativeName>
</protein>
<feature type="transit peptide" description="Mitochondrion" evidence="1">
    <location>
        <begin position="1"/>
        <end position="16"/>
    </location>
</feature>
<feature type="chain" id="PRO_0000278279" description="Large ribosomal subunit protein mL54">
    <location>
        <begin position="17"/>
        <end position="138"/>
    </location>
</feature>
<evidence type="ECO:0000255" key="1"/>
<evidence type="ECO:0000269" key="2">
    <source>
    </source>
</evidence>
<evidence type="ECO:0000305" key="3"/>
<gene>
    <name type="primary">MRPL54</name>
</gene>